<comment type="function">
    <text evidence="1">Succinyl-CoA synthetase functions in the citric acid cycle (TCA), coupling the hydrolysis of succinyl-CoA to the synthesis of either ATP or GTP and thus represents the only step of substrate-level phosphorylation in the TCA. The beta subunit provides nucleotide specificity of the enzyme and binds the substrate succinate, while the binding sites for coenzyme A and phosphate are found in the alpha subunit.</text>
</comment>
<comment type="catalytic activity">
    <reaction evidence="1">
        <text>succinate + ATP + CoA = succinyl-CoA + ADP + phosphate</text>
        <dbReference type="Rhea" id="RHEA:17661"/>
        <dbReference type="ChEBI" id="CHEBI:30031"/>
        <dbReference type="ChEBI" id="CHEBI:30616"/>
        <dbReference type="ChEBI" id="CHEBI:43474"/>
        <dbReference type="ChEBI" id="CHEBI:57287"/>
        <dbReference type="ChEBI" id="CHEBI:57292"/>
        <dbReference type="ChEBI" id="CHEBI:456216"/>
        <dbReference type="EC" id="6.2.1.5"/>
    </reaction>
    <physiologicalReaction direction="right-to-left" evidence="1">
        <dbReference type="Rhea" id="RHEA:17663"/>
    </physiologicalReaction>
</comment>
<comment type="catalytic activity">
    <reaction evidence="1">
        <text>GTP + succinate + CoA = succinyl-CoA + GDP + phosphate</text>
        <dbReference type="Rhea" id="RHEA:22120"/>
        <dbReference type="ChEBI" id="CHEBI:30031"/>
        <dbReference type="ChEBI" id="CHEBI:37565"/>
        <dbReference type="ChEBI" id="CHEBI:43474"/>
        <dbReference type="ChEBI" id="CHEBI:57287"/>
        <dbReference type="ChEBI" id="CHEBI:57292"/>
        <dbReference type="ChEBI" id="CHEBI:58189"/>
    </reaction>
    <physiologicalReaction direction="right-to-left" evidence="1">
        <dbReference type="Rhea" id="RHEA:22122"/>
    </physiologicalReaction>
</comment>
<comment type="cofactor">
    <cofactor evidence="1">
        <name>Mg(2+)</name>
        <dbReference type="ChEBI" id="CHEBI:18420"/>
    </cofactor>
    <text evidence="1">Binds 1 Mg(2+) ion per subunit.</text>
</comment>
<comment type="pathway">
    <text evidence="1">Carbohydrate metabolism; tricarboxylic acid cycle; succinate from succinyl-CoA (ligase route): step 1/1.</text>
</comment>
<comment type="subunit">
    <text evidence="1">Heterotetramer of two alpha and two beta subunits.</text>
</comment>
<comment type="similarity">
    <text evidence="1">Belongs to the succinate/malate CoA ligase beta subunit family.</text>
</comment>
<proteinExistence type="inferred from homology"/>
<keyword id="KW-0067">ATP-binding</keyword>
<keyword id="KW-0436">Ligase</keyword>
<keyword id="KW-0460">Magnesium</keyword>
<keyword id="KW-0479">Metal-binding</keyword>
<keyword id="KW-0547">Nucleotide-binding</keyword>
<keyword id="KW-1185">Reference proteome</keyword>
<keyword id="KW-0816">Tricarboxylic acid cycle</keyword>
<name>SUCC_ALBFT</name>
<reference key="1">
    <citation type="submission" date="2006-02" db="EMBL/GenBank/DDBJ databases">
        <title>Complete sequence of chromosome of Rhodoferax ferrireducens DSM 15236.</title>
        <authorList>
            <person name="Copeland A."/>
            <person name="Lucas S."/>
            <person name="Lapidus A."/>
            <person name="Barry K."/>
            <person name="Detter J.C."/>
            <person name="Glavina del Rio T."/>
            <person name="Hammon N."/>
            <person name="Israni S."/>
            <person name="Pitluck S."/>
            <person name="Brettin T."/>
            <person name="Bruce D."/>
            <person name="Han C."/>
            <person name="Tapia R."/>
            <person name="Gilna P."/>
            <person name="Kiss H."/>
            <person name="Schmutz J."/>
            <person name="Larimer F."/>
            <person name="Land M."/>
            <person name="Kyrpides N."/>
            <person name="Ivanova N."/>
            <person name="Richardson P."/>
        </authorList>
    </citation>
    <scope>NUCLEOTIDE SEQUENCE [LARGE SCALE GENOMIC DNA]</scope>
    <source>
        <strain>ATCC BAA-621 / DSM 15236 / T118</strain>
    </source>
</reference>
<gene>
    <name evidence="1" type="primary">sucC</name>
    <name type="ordered locus">Rfer_3945</name>
</gene>
<evidence type="ECO:0000255" key="1">
    <source>
        <dbReference type="HAMAP-Rule" id="MF_00558"/>
    </source>
</evidence>
<dbReference type="EC" id="6.2.1.5" evidence="1"/>
<dbReference type="EMBL" id="CP000267">
    <property type="protein sequence ID" value="ABD71644.1"/>
    <property type="molecule type" value="Genomic_DNA"/>
</dbReference>
<dbReference type="RefSeq" id="WP_011466206.1">
    <property type="nucleotide sequence ID" value="NC_007908.1"/>
</dbReference>
<dbReference type="SMR" id="Q21RF9"/>
<dbReference type="STRING" id="338969.Rfer_3945"/>
<dbReference type="KEGG" id="rfr:Rfer_3945"/>
<dbReference type="eggNOG" id="COG0045">
    <property type="taxonomic scope" value="Bacteria"/>
</dbReference>
<dbReference type="HOGENOM" id="CLU_037430_0_2_4"/>
<dbReference type="OrthoDB" id="9802602at2"/>
<dbReference type="UniPathway" id="UPA00223">
    <property type="reaction ID" value="UER00999"/>
</dbReference>
<dbReference type="Proteomes" id="UP000008332">
    <property type="component" value="Chromosome"/>
</dbReference>
<dbReference type="GO" id="GO:0005829">
    <property type="term" value="C:cytosol"/>
    <property type="evidence" value="ECO:0007669"/>
    <property type="project" value="TreeGrafter"/>
</dbReference>
<dbReference type="GO" id="GO:0042709">
    <property type="term" value="C:succinate-CoA ligase complex"/>
    <property type="evidence" value="ECO:0007669"/>
    <property type="project" value="TreeGrafter"/>
</dbReference>
<dbReference type="GO" id="GO:0005524">
    <property type="term" value="F:ATP binding"/>
    <property type="evidence" value="ECO:0007669"/>
    <property type="project" value="UniProtKB-UniRule"/>
</dbReference>
<dbReference type="GO" id="GO:0000287">
    <property type="term" value="F:magnesium ion binding"/>
    <property type="evidence" value="ECO:0007669"/>
    <property type="project" value="UniProtKB-UniRule"/>
</dbReference>
<dbReference type="GO" id="GO:0004775">
    <property type="term" value="F:succinate-CoA ligase (ADP-forming) activity"/>
    <property type="evidence" value="ECO:0007669"/>
    <property type="project" value="UniProtKB-UniRule"/>
</dbReference>
<dbReference type="GO" id="GO:0004776">
    <property type="term" value="F:succinate-CoA ligase (GDP-forming) activity"/>
    <property type="evidence" value="ECO:0007669"/>
    <property type="project" value="RHEA"/>
</dbReference>
<dbReference type="GO" id="GO:0006104">
    <property type="term" value="P:succinyl-CoA metabolic process"/>
    <property type="evidence" value="ECO:0007669"/>
    <property type="project" value="TreeGrafter"/>
</dbReference>
<dbReference type="GO" id="GO:0006099">
    <property type="term" value="P:tricarboxylic acid cycle"/>
    <property type="evidence" value="ECO:0007669"/>
    <property type="project" value="UniProtKB-UniRule"/>
</dbReference>
<dbReference type="FunFam" id="3.30.1490.20:FF:000002">
    <property type="entry name" value="Succinate--CoA ligase [ADP-forming] subunit beta"/>
    <property type="match status" value="1"/>
</dbReference>
<dbReference type="FunFam" id="3.30.470.20:FF:000002">
    <property type="entry name" value="Succinate--CoA ligase [ADP-forming] subunit beta"/>
    <property type="match status" value="1"/>
</dbReference>
<dbReference type="FunFam" id="3.40.50.261:FF:000001">
    <property type="entry name" value="Succinate--CoA ligase [ADP-forming] subunit beta"/>
    <property type="match status" value="1"/>
</dbReference>
<dbReference type="Gene3D" id="3.30.1490.20">
    <property type="entry name" value="ATP-grasp fold, A domain"/>
    <property type="match status" value="1"/>
</dbReference>
<dbReference type="Gene3D" id="3.30.470.20">
    <property type="entry name" value="ATP-grasp fold, B domain"/>
    <property type="match status" value="1"/>
</dbReference>
<dbReference type="Gene3D" id="3.40.50.261">
    <property type="entry name" value="Succinyl-CoA synthetase domains"/>
    <property type="match status" value="1"/>
</dbReference>
<dbReference type="HAMAP" id="MF_00558">
    <property type="entry name" value="Succ_CoA_beta"/>
    <property type="match status" value="1"/>
</dbReference>
<dbReference type="InterPro" id="IPR011761">
    <property type="entry name" value="ATP-grasp"/>
</dbReference>
<dbReference type="InterPro" id="IPR013650">
    <property type="entry name" value="ATP-grasp_succ-CoA_synth-type"/>
</dbReference>
<dbReference type="InterPro" id="IPR013815">
    <property type="entry name" value="ATP_grasp_subdomain_1"/>
</dbReference>
<dbReference type="InterPro" id="IPR017866">
    <property type="entry name" value="Succ-CoA_synthase_bsu_CS"/>
</dbReference>
<dbReference type="InterPro" id="IPR005811">
    <property type="entry name" value="SUCC_ACL_C"/>
</dbReference>
<dbReference type="InterPro" id="IPR005809">
    <property type="entry name" value="Succ_CoA_ligase-like_bsu"/>
</dbReference>
<dbReference type="InterPro" id="IPR016102">
    <property type="entry name" value="Succinyl-CoA_synth-like"/>
</dbReference>
<dbReference type="NCBIfam" id="NF001913">
    <property type="entry name" value="PRK00696.1"/>
    <property type="match status" value="1"/>
</dbReference>
<dbReference type="NCBIfam" id="TIGR01016">
    <property type="entry name" value="sucCoAbeta"/>
    <property type="match status" value="1"/>
</dbReference>
<dbReference type="PANTHER" id="PTHR11815:SF10">
    <property type="entry name" value="SUCCINATE--COA LIGASE [GDP-FORMING] SUBUNIT BETA, MITOCHONDRIAL"/>
    <property type="match status" value="1"/>
</dbReference>
<dbReference type="PANTHER" id="PTHR11815">
    <property type="entry name" value="SUCCINYL-COA SYNTHETASE BETA CHAIN"/>
    <property type="match status" value="1"/>
</dbReference>
<dbReference type="Pfam" id="PF08442">
    <property type="entry name" value="ATP-grasp_2"/>
    <property type="match status" value="1"/>
</dbReference>
<dbReference type="Pfam" id="PF00549">
    <property type="entry name" value="Ligase_CoA"/>
    <property type="match status" value="1"/>
</dbReference>
<dbReference type="PIRSF" id="PIRSF001554">
    <property type="entry name" value="SucCS_beta"/>
    <property type="match status" value="1"/>
</dbReference>
<dbReference type="SUPFAM" id="SSF56059">
    <property type="entry name" value="Glutathione synthetase ATP-binding domain-like"/>
    <property type="match status" value="1"/>
</dbReference>
<dbReference type="SUPFAM" id="SSF52210">
    <property type="entry name" value="Succinyl-CoA synthetase domains"/>
    <property type="match status" value="1"/>
</dbReference>
<dbReference type="PROSITE" id="PS50975">
    <property type="entry name" value="ATP_GRASP"/>
    <property type="match status" value="1"/>
</dbReference>
<dbReference type="PROSITE" id="PS01217">
    <property type="entry name" value="SUCCINYL_COA_LIG_3"/>
    <property type="match status" value="1"/>
</dbReference>
<feature type="chain" id="PRO_1000082188" description="Succinate--CoA ligase [ADP-forming] subunit beta">
    <location>
        <begin position="1"/>
        <end position="388"/>
    </location>
</feature>
<feature type="domain" description="ATP-grasp" evidence="1">
    <location>
        <begin position="9"/>
        <end position="244"/>
    </location>
</feature>
<feature type="binding site" evidence="1">
    <location>
        <position position="46"/>
    </location>
    <ligand>
        <name>ATP</name>
        <dbReference type="ChEBI" id="CHEBI:30616"/>
    </ligand>
</feature>
<feature type="binding site" evidence="1">
    <location>
        <begin position="53"/>
        <end position="55"/>
    </location>
    <ligand>
        <name>ATP</name>
        <dbReference type="ChEBI" id="CHEBI:30616"/>
    </ligand>
</feature>
<feature type="binding site" evidence="1">
    <location>
        <position position="99"/>
    </location>
    <ligand>
        <name>ATP</name>
        <dbReference type="ChEBI" id="CHEBI:30616"/>
    </ligand>
</feature>
<feature type="binding site" evidence="1">
    <location>
        <position position="102"/>
    </location>
    <ligand>
        <name>ATP</name>
        <dbReference type="ChEBI" id="CHEBI:30616"/>
    </ligand>
</feature>
<feature type="binding site" evidence="1">
    <location>
        <position position="107"/>
    </location>
    <ligand>
        <name>ATP</name>
        <dbReference type="ChEBI" id="CHEBI:30616"/>
    </ligand>
</feature>
<feature type="binding site" evidence="1">
    <location>
        <position position="199"/>
    </location>
    <ligand>
        <name>Mg(2+)</name>
        <dbReference type="ChEBI" id="CHEBI:18420"/>
    </ligand>
</feature>
<feature type="binding site" evidence="1">
    <location>
        <position position="213"/>
    </location>
    <ligand>
        <name>Mg(2+)</name>
        <dbReference type="ChEBI" id="CHEBI:18420"/>
    </ligand>
</feature>
<feature type="binding site" evidence="1">
    <location>
        <position position="264"/>
    </location>
    <ligand>
        <name>substrate</name>
        <note>ligand shared with subunit alpha</note>
    </ligand>
</feature>
<feature type="binding site" evidence="1">
    <location>
        <begin position="321"/>
        <end position="323"/>
    </location>
    <ligand>
        <name>substrate</name>
        <note>ligand shared with subunit alpha</note>
    </ligand>
</feature>
<protein>
    <recommendedName>
        <fullName evidence="1">Succinate--CoA ligase [ADP-forming] subunit beta</fullName>
        <ecNumber evidence="1">6.2.1.5</ecNumber>
    </recommendedName>
    <alternativeName>
        <fullName evidence="1">Succinyl-CoA synthetase subunit beta</fullName>
        <shortName evidence="1">SCS-beta</shortName>
    </alternativeName>
</protein>
<sequence>MKIHEYQGKEILRQAGVPVPRGIPAFTVQEAVEAAQKLGGPVWVVKAQIHAGGRGKGGGVKLARSIDEVKKLAGEILGMQLVTHQTGPEGQKVRRLLIEDGADIQKEYYVSAVTDRASQRVAMIVSSEGGMSIEDVAHDTPEKIITEIVDPATGLTVAQATKLANAIGVPAGSTAQAVDVLQKVYKVYMDTDASLVEINPMILEGNGNIKAIDAKFNFDDNALFRHPEIVAYRDLDEEDPAEVEASKFDLAYISLDGNIGCLVNGAGLAMATMDTIKLFGASPANFLDVGGGATPEKVTEAFKIMLKNPNVKVILVNIFGGIMKCDTIAAGVIAACKAVNLNVPLVVRMKGTNEELGKKLLAESGLPIISADTMADAAQKAVAAVKAA</sequence>
<accession>Q21RF9</accession>
<organism>
    <name type="scientific">Albidiferax ferrireducens (strain ATCC BAA-621 / DSM 15236 / T118)</name>
    <name type="common">Rhodoferax ferrireducens</name>
    <dbReference type="NCBI Taxonomy" id="338969"/>
    <lineage>
        <taxon>Bacteria</taxon>
        <taxon>Pseudomonadati</taxon>
        <taxon>Pseudomonadota</taxon>
        <taxon>Betaproteobacteria</taxon>
        <taxon>Burkholderiales</taxon>
        <taxon>Comamonadaceae</taxon>
        <taxon>Rhodoferax</taxon>
    </lineage>
</organism>